<organism>
    <name type="scientific">Caenorhabditis elegans</name>
    <dbReference type="NCBI Taxonomy" id="6239"/>
    <lineage>
        <taxon>Eukaryota</taxon>
        <taxon>Metazoa</taxon>
        <taxon>Ecdysozoa</taxon>
        <taxon>Nematoda</taxon>
        <taxon>Chromadorea</taxon>
        <taxon>Rhabditida</taxon>
        <taxon>Rhabditina</taxon>
        <taxon>Rhabditomorpha</taxon>
        <taxon>Rhabditoidea</taxon>
        <taxon>Rhabditidae</taxon>
        <taxon>Peloderinae</taxon>
        <taxon>Caenorhabditis</taxon>
    </lineage>
</organism>
<proteinExistence type="evidence at protein level"/>
<reference key="1">
    <citation type="journal article" date="1998" name="Science">
        <title>Genome sequence of the nematode C. elegans: a platform for investigating biology.</title>
        <authorList>
            <consortium name="The C. elegans sequencing consortium"/>
        </authorList>
    </citation>
    <scope>NUCLEOTIDE SEQUENCE [LARGE SCALE GENOMIC DNA]</scope>
    <source>
        <strain>Bristol N2</strain>
    </source>
</reference>
<comment type="similarity">
    <text evidence="2">Belongs to the eukaryotic ribosomal protein eL15 family.</text>
</comment>
<dbReference type="EMBL" id="FO081353">
    <property type="protein sequence ID" value="CCD70971.1"/>
    <property type="molecule type" value="Genomic_DNA"/>
</dbReference>
<dbReference type="PIR" id="T34437">
    <property type="entry name" value="T34437"/>
</dbReference>
<dbReference type="RefSeq" id="NP_499964.1">
    <property type="nucleotide sequence ID" value="NM_067563.8"/>
</dbReference>
<dbReference type="PDB" id="9BH5">
    <property type="method" value="EM"/>
    <property type="resolution" value="2.63 A"/>
    <property type="chains" value="CN=1-204"/>
</dbReference>
<dbReference type="PDB" id="9CAI">
    <property type="method" value="EM"/>
    <property type="resolution" value="2.59 A"/>
    <property type="chains" value="CN=1-204"/>
</dbReference>
<dbReference type="PDBsum" id="9BH5"/>
<dbReference type="PDBsum" id="9CAI"/>
<dbReference type="EMDB" id="EMD-44533"/>
<dbReference type="EMDB" id="EMD-45392"/>
<dbReference type="SMR" id="P91374"/>
<dbReference type="BioGRID" id="42052">
    <property type="interactions" value="85"/>
</dbReference>
<dbReference type="DIP" id="DIP-27467N"/>
<dbReference type="FunCoup" id="P91374">
    <property type="interactions" value="2347"/>
</dbReference>
<dbReference type="STRING" id="6239.K11H12.2.1"/>
<dbReference type="PaxDb" id="6239-K11H12.2"/>
<dbReference type="PeptideAtlas" id="P91374"/>
<dbReference type="EnsemblMetazoa" id="K11H12.2.1">
    <property type="protein sequence ID" value="K11H12.2.1"/>
    <property type="gene ID" value="WBGene00004427"/>
</dbReference>
<dbReference type="GeneID" id="176891"/>
<dbReference type="KEGG" id="cel:CELE_K11H12.2"/>
<dbReference type="UCSC" id="K11H12.2.1">
    <property type="organism name" value="c. elegans"/>
</dbReference>
<dbReference type="AGR" id="WB:WBGene00004427"/>
<dbReference type="CTD" id="176891"/>
<dbReference type="WormBase" id="K11H12.2">
    <property type="protein sequence ID" value="CE12148"/>
    <property type="gene ID" value="WBGene00004427"/>
    <property type="gene designation" value="rpl-15"/>
</dbReference>
<dbReference type="eggNOG" id="KOG1678">
    <property type="taxonomic scope" value="Eukaryota"/>
</dbReference>
<dbReference type="GeneTree" id="ENSGT00910000144184"/>
<dbReference type="HOGENOM" id="CLU_080796_0_0_1"/>
<dbReference type="InParanoid" id="P91374"/>
<dbReference type="OMA" id="YIRDAWK"/>
<dbReference type="OrthoDB" id="10255148at2759"/>
<dbReference type="PhylomeDB" id="P91374"/>
<dbReference type="Reactome" id="R-CEL-156827">
    <property type="pathway name" value="L13a-mediated translational silencing of Ceruloplasmin expression"/>
</dbReference>
<dbReference type="Reactome" id="R-CEL-1799339">
    <property type="pathway name" value="SRP-dependent cotranslational protein targeting to membrane"/>
</dbReference>
<dbReference type="Reactome" id="R-CEL-72689">
    <property type="pathway name" value="Formation of a pool of free 40S subunits"/>
</dbReference>
<dbReference type="Reactome" id="R-CEL-72706">
    <property type="pathway name" value="GTP hydrolysis and joining of the 60S ribosomal subunit"/>
</dbReference>
<dbReference type="Reactome" id="R-CEL-975956">
    <property type="pathway name" value="Nonsense Mediated Decay (NMD) independent of the Exon Junction Complex (EJC)"/>
</dbReference>
<dbReference type="Reactome" id="R-CEL-975957">
    <property type="pathway name" value="Nonsense Mediated Decay (NMD) enhanced by the Exon Junction Complex (EJC)"/>
</dbReference>
<dbReference type="PRO" id="PR:P91374"/>
<dbReference type="Proteomes" id="UP000001940">
    <property type="component" value="Chromosome IV"/>
</dbReference>
<dbReference type="Bgee" id="WBGene00004427">
    <property type="expression patterns" value="Expressed in larva and 3 other cell types or tissues"/>
</dbReference>
<dbReference type="GO" id="GO:0022625">
    <property type="term" value="C:cytosolic large ribosomal subunit"/>
    <property type="evidence" value="ECO:0000318"/>
    <property type="project" value="GO_Central"/>
</dbReference>
<dbReference type="GO" id="GO:0003723">
    <property type="term" value="F:RNA binding"/>
    <property type="evidence" value="ECO:0000318"/>
    <property type="project" value="GO_Central"/>
</dbReference>
<dbReference type="GO" id="GO:0003735">
    <property type="term" value="F:structural constituent of ribosome"/>
    <property type="evidence" value="ECO:0000318"/>
    <property type="project" value="GO_Central"/>
</dbReference>
<dbReference type="GO" id="GO:0002181">
    <property type="term" value="P:cytoplasmic translation"/>
    <property type="evidence" value="ECO:0000318"/>
    <property type="project" value="GO_Central"/>
</dbReference>
<dbReference type="FunFam" id="3.40.1120.10:FF:000001">
    <property type="entry name" value="Ribosomal protein L15"/>
    <property type="match status" value="1"/>
</dbReference>
<dbReference type="Gene3D" id="3.40.1120.10">
    <property type="entry name" value="Ribosomal protein l15e"/>
    <property type="match status" value="1"/>
</dbReference>
<dbReference type="InterPro" id="IPR024794">
    <property type="entry name" value="Rbsml_eL15_core_dom_sf"/>
</dbReference>
<dbReference type="InterPro" id="IPR000439">
    <property type="entry name" value="Ribosomal_eL15"/>
</dbReference>
<dbReference type="InterPro" id="IPR020925">
    <property type="entry name" value="Ribosomal_eL15_CS"/>
</dbReference>
<dbReference type="InterPro" id="IPR012678">
    <property type="entry name" value="Ribosomal_uL23/eL15/eS24_sf"/>
</dbReference>
<dbReference type="NCBIfam" id="NF003269">
    <property type="entry name" value="PRK04243.1"/>
    <property type="match status" value="1"/>
</dbReference>
<dbReference type="PANTHER" id="PTHR11847:SF4">
    <property type="entry name" value="LARGE RIBOSOMAL SUBUNIT PROTEIN EL15"/>
    <property type="match status" value="1"/>
</dbReference>
<dbReference type="PANTHER" id="PTHR11847">
    <property type="entry name" value="RIBOSOMAL PROTEIN L15"/>
    <property type="match status" value="1"/>
</dbReference>
<dbReference type="Pfam" id="PF00827">
    <property type="entry name" value="Ribosomal_L15e"/>
    <property type="match status" value="1"/>
</dbReference>
<dbReference type="SMART" id="SM01384">
    <property type="entry name" value="Ribosomal_L15e"/>
    <property type="match status" value="1"/>
</dbReference>
<dbReference type="SUPFAM" id="SSF54189">
    <property type="entry name" value="Ribosomal proteins S24e, L23 and L15e"/>
    <property type="match status" value="1"/>
</dbReference>
<dbReference type="PROSITE" id="PS01194">
    <property type="entry name" value="RIBOSOMAL_L15E"/>
    <property type="match status" value="1"/>
</dbReference>
<sequence length="204" mass="24125">MGAYKYMQEIWRKKQSDALRYLLRIRTWHYRQLSAVHRVPRPTRPEKARRLGYRAKQGFVVYRVRVRRGNRKRPVCKGQTYGKPKTHGVNELKNAKSKQAVAEGRAGRRLGSLRVLNSYWVAEDSTYKFYEVVLIDPFHKAIRRNPDTQWITKPVHKHREQRGLTSAGRKSRGLGKGWRFSATRGGSQAKNWKRKNTKVFHRKR</sequence>
<keyword id="KW-0002">3D-structure</keyword>
<keyword id="KW-1185">Reference proteome</keyword>
<keyword id="KW-0687">Ribonucleoprotein</keyword>
<keyword id="KW-0689">Ribosomal protein</keyword>
<evidence type="ECO:0000256" key="1">
    <source>
        <dbReference type="SAM" id="MobiDB-lite"/>
    </source>
</evidence>
<evidence type="ECO:0000305" key="2"/>
<name>RL15_CAEEL</name>
<accession>P91374</accession>
<feature type="chain" id="PRO_0000127552" description="Large ribosomal subunit protein eL15">
    <location>
        <begin position="1"/>
        <end position="204"/>
    </location>
</feature>
<feature type="region of interest" description="Disordered" evidence="1">
    <location>
        <begin position="155"/>
        <end position="204"/>
    </location>
</feature>
<feature type="compositionally biased region" description="Basic residues" evidence="1">
    <location>
        <begin position="191"/>
        <end position="204"/>
    </location>
</feature>
<gene>
    <name type="primary">rpl-15</name>
    <name type="ORF">K11H12.2</name>
</gene>
<protein>
    <recommendedName>
        <fullName evidence="2">Large ribosomal subunit protein eL15</fullName>
    </recommendedName>
    <alternativeName>
        <fullName>60S ribosomal protein L15</fullName>
    </alternativeName>
</protein>